<feature type="chain" id="PRO_0000072389" description="Synergin gamma">
    <location>
        <begin position="1"/>
        <end position="1329"/>
    </location>
</feature>
<feature type="domain" description="EH" evidence="4">
    <location>
        <begin position="393"/>
        <end position="504"/>
    </location>
</feature>
<feature type="region of interest" description="Disordered" evidence="5">
    <location>
        <begin position="175"/>
        <end position="211"/>
    </location>
</feature>
<feature type="region of interest" description="Disordered" evidence="5">
    <location>
        <begin position="578"/>
        <end position="600"/>
    </location>
</feature>
<feature type="region of interest" description="Interaction with AP1G1" evidence="2">
    <location>
        <begin position="614"/>
        <end position="878"/>
    </location>
</feature>
<feature type="region of interest" description="Disordered" evidence="5">
    <location>
        <begin position="661"/>
        <end position="701"/>
    </location>
</feature>
<feature type="region of interest" description="Disordered" evidence="5">
    <location>
        <begin position="730"/>
        <end position="753"/>
    </location>
</feature>
<feature type="region of interest" description="Interaction with AP1G1, AP1G2 and GGA1" evidence="2">
    <location>
        <begin position="761"/>
        <end position="773"/>
    </location>
</feature>
<feature type="region of interest" description="Disordered" evidence="5">
    <location>
        <begin position="797"/>
        <end position="835"/>
    </location>
</feature>
<feature type="region of interest" description="Disordered" evidence="5">
    <location>
        <begin position="856"/>
        <end position="922"/>
    </location>
</feature>
<feature type="region of interest" description="Disordered" evidence="5">
    <location>
        <begin position="941"/>
        <end position="1042"/>
    </location>
</feature>
<feature type="region of interest" description="Disordered" evidence="5">
    <location>
        <begin position="1088"/>
        <end position="1113"/>
    </location>
</feature>
<feature type="coiled-coil region" evidence="3">
    <location>
        <begin position="112"/>
        <end position="152"/>
    </location>
</feature>
<feature type="short sequence motif" description="DFXDF motif 1">
    <location>
        <begin position="555"/>
        <end position="559"/>
    </location>
</feature>
<feature type="short sequence motif" description="DFXDF motif 2">
    <location>
        <begin position="785"/>
        <end position="789"/>
    </location>
</feature>
<feature type="short sequence motif" description="DFXDF motif 3">
    <location>
        <begin position="867"/>
        <end position="871"/>
    </location>
</feature>
<feature type="compositionally biased region" description="Low complexity" evidence="5">
    <location>
        <begin position="197"/>
        <end position="209"/>
    </location>
</feature>
<feature type="compositionally biased region" description="Polar residues" evidence="5">
    <location>
        <begin position="578"/>
        <end position="594"/>
    </location>
</feature>
<feature type="compositionally biased region" description="Basic and acidic residues" evidence="5">
    <location>
        <begin position="801"/>
        <end position="814"/>
    </location>
</feature>
<feature type="compositionally biased region" description="Basic and acidic residues" evidence="5">
    <location>
        <begin position="864"/>
        <end position="873"/>
    </location>
</feature>
<feature type="compositionally biased region" description="Low complexity" evidence="5">
    <location>
        <begin position="874"/>
        <end position="883"/>
    </location>
</feature>
<feature type="compositionally biased region" description="Polar residues" evidence="5">
    <location>
        <begin position="944"/>
        <end position="955"/>
    </location>
</feature>
<feature type="compositionally biased region" description="Polar residues" evidence="5">
    <location>
        <begin position="1016"/>
        <end position="1028"/>
    </location>
</feature>
<feature type="modified residue" description="Phosphoserine" evidence="2">
    <location>
        <position position="571"/>
    </location>
</feature>
<feature type="modified residue" description="N6-acetyllysine" evidence="2">
    <location>
        <position position="609"/>
    </location>
</feature>
<feature type="modified residue" description="Phosphoserine" evidence="2">
    <location>
        <position position="676"/>
    </location>
</feature>
<feature type="modified residue" description="Phosphoserine" evidence="2">
    <location>
        <position position="815"/>
    </location>
</feature>
<feature type="modified residue" description="N6-acetyllysine" evidence="2">
    <location>
        <position position="836"/>
    </location>
</feature>
<feature type="modified residue" description="Phosphoserine" evidence="10">
    <location>
        <position position="844"/>
    </location>
</feature>
<feature type="modified residue" description="Phosphoserine" evidence="2">
    <location>
        <position position="864"/>
    </location>
</feature>
<feature type="modified residue" description="Phosphoserine" evidence="10">
    <location>
        <position position="904"/>
    </location>
</feature>
<feature type="modified residue" description="Phosphoserine" evidence="2">
    <location>
        <position position="944"/>
    </location>
</feature>
<feature type="modified residue" description="Phosphoserine" evidence="2">
    <location>
        <position position="947"/>
    </location>
</feature>
<feature type="modified residue" description="Phosphoserine" evidence="10">
    <location>
        <position position="997"/>
    </location>
</feature>
<feature type="modified residue" description="Phosphoserine" evidence="2">
    <location>
        <position position="1021"/>
    </location>
</feature>
<feature type="modified residue" description="Phosphoserine" evidence="10">
    <location>
        <position position="1088"/>
    </location>
</feature>
<feature type="modified residue" description="Phosphoserine" evidence="10">
    <location>
        <position position="1090"/>
    </location>
</feature>
<feature type="modified residue" description="Phosphoserine" evidence="2">
    <location>
        <position position="1102"/>
    </location>
</feature>
<feature type="modified residue" description="Phosphoserine" evidence="2">
    <location>
        <position position="1113"/>
    </location>
</feature>
<feature type="modified residue" description="Phosphothreonine" evidence="2">
    <location>
        <position position="1115"/>
    </location>
</feature>
<feature type="splice variant" id="VSP_023017" description="In isoform 2 and isoform 3." evidence="8">
    <location>
        <begin position="194"/>
        <end position="372"/>
    </location>
</feature>
<feature type="splice variant" id="VSP_023018" description="In isoform 4." evidence="8">
    <location>
        <begin position="194"/>
        <end position="294"/>
    </location>
</feature>
<feature type="splice variant" id="VSP_023019" description="In isoform 3 and isoform 4." evidence="8">
    <location>
        <begin position="1275"/>
        <end position="1286"/>
    </location>
</feature>
<evidence type="ECO:0000250" key="1"/>
<evidence type="ECO:0000250" key="2">
    <source>
        <dbReference type="UniProtKB" id="Q9UMZ2"/>
    </source>
</evidence>
<evidence type="ECO:0000255" key="3"/>
<evidence type="ECO:0000255" key="4">
    <source>
        <dbReference type="PROSITE-ProRule" id="PRU00077"/>
    </source>
</evidence>
<evidence type="ECO:0000256" key="5">
    <source>
        <dbReference type="SAM" id="MobiDB-lite"/>
    </source>
</evidence>
<evidence type="ECO:0000269" key="6">
    <source>
    </source>
</evidence>
<evidence type="ECO:0000269" key="7">
    <source>
    </source>
</evidence>
<evidence type="ECO:0000303" key="8">
    <source>
    </source>
</evidence>
<evidence type="ECO:0000305" key="9"/>
<evidence type="ECO:0007744" key="10">
    <source>
    </source>
</evidence>
<proteinExistence type="evidence at protein level"/>
<reference key="1">
    <citation type="journal article" date="2007" name="Genomics">
        <title>Fine-mapping and comprehensive transcript analysis reveals nonsynonymous variants within a novel 1.17 Mb blood pressure QTL region on rat chromosome 10.</title>
        <authorList>
            <person name="Saad Y."/>
            <person name="Garrett M.R."/>
            <person name="Manickavasagam E."/>
            <person name="Yerga-Woolwine S."/>
            <person name="Farms P."/>
            <person name="Radecki T."/>
            <person name="Joe B."/>
        </authorList>
    </citation>
    <scope>NUCLEOTIDE SEQUENCE [MRNA] (ISOFORMS 1; 2; 3 AND 4)</scope>
    <source>
        <strain>Lewis</strain>
    </source>
</reference>
<reference key="2">
    <citation type="journal article" date="2000" name="J. Biol. Chem.">
        <title>SCAMP1 function in endocytosis.</title>
        <authorList>
            <person name="Fernandez-Chacon R."/>
            <person name="Achiriloaie M."/>
            <person name="Janz R."/>
            <person name="Albanesi J.P."/>
            <person name="Suedhof T.C."/>
        </authorList>
    </citation>
    <scope>NUCLEOTIDE SEQUENCE [MRNA] OF 1-879 (ISOFORMS 2/3)</scope>
    <scope>INTERACTION WITH SCAMP1</scope>
</reference>
<reference key="3">
    <citation type="journal article" date="1999" name="J. Cell Biol.">
        <title>Gamma-synergin: an EH domain-containing protein that interacts with gamma-adaptin.</title>
        <authorList>
            <person name="Page L.J."/>
            <person name="Sowerby P.J."/>
            <person name="Lui W.W.Y."/>
            <person name="Robinson M.S."/>
        </authorList>
    </citation>
    <scope>NUCLEOTIDE SEQUENCE [MRNA] OF 165-879 (ISOFORMS 2/3)</scope>
    <scope>SUBCELLULAR LOCATION</scope>
    <scope>TISSUE SPECIFICITY</scope>
    <source>
        <tissue>Brain</tissue>
    </source>
</reference>
<reference key="4">
    <citation type="journal article" date="2012" name="Nat. Commun.">
        <title>Quantitative maps of protein phosphorylation sites across 14 different rat organs and tissues.</title>
        <authorList>
            <person name="Lundby A."/>
            <person name="Secher A."/>
            <person name="Lage K."/>
            <person name="Nordsborg N.B."/>
            <person name="Dmytriyev A."/>
            <person name="Lundby C."/>
            <person name="Olsen J.V."/>
        </authorList>
    </citation>
    <scope>PHOSPHORYLATION [LARGE SCALE ANALYSIS] AT SER-844; SER-904; SER-997; SER-1088 AND SER-1090</scope>
    <scope>IDENTIFICATION BY MASS SPECTROMETRY [LARGE SCALE ANALYSIS]</scope>
</reference>
<organism>
    <name type="scientific">Rattus norvegicus</name>
    <name type="common">Rat</name>
    <dbReference type="NCBI Taxonomy" id="10116"/>
    <lineage>
        <taxon>Eukaryota</taxon>
        <taxon>Metazoa</taxon>
        <taxon>Chordata</taxon>
        <taxon>Craniata</taxon>
        <taxon>Vertebrata</taxon>
        <taxon>Euteleostomi</taxon>
        <taxon>Mammalia</taxon>
        <taxon>Eutheria</taxon>
        <taxon>Euarchontoglires</taxon>
        <taxon>Glires</taxon>
        <taxon>Rodentia</taxon>
        <taxon>Myomorpha</taxon>
        <taxon>Muroidea</taxon>
        <taxon>Muridae</taxon>
        <taxon>Murinae</taxon>
        <taxon>Rattus</taxon>
    </lineage>
</organism>
<name>SYNRG_RAT</name>
<protein>
    <recommendedName>
        <fullName>Synergin gamma</fullName>
    </recommendedName>
    <alternativeName>
        <fullName>AP1 subunit gamma-binding protein 1</fullName>
    </alternativeName>
    <alternativeName>
        <fullName>Gamma-synergin</fullName>
    </alternativeName>
</protein>
<dbReference type="EMBL" id="EF121979">
    <property type="protein sequence ID" value="ABL63418.1"/>
    <property type="molecule type" value="mRNA"/>
</dbReference>
<dbReference type="EMBL" id="EF121977">
    <property type="protein sequence ID" value="ABL63416.1"/>
    <property type="molecule type" value="mRNA"/>
</dbReference>
<dbReference type="EMBL" id="EF121978">
    <property type="protein sequence ID" value="ABL63417.1"/>
    <property type="molecule type" value="mRNA"/>
</dbReference>
<dbReference type="EMBL" id="EF121980">
    <property type="protein sequence ID" value="ABL63419.1"/>
    <property type="molecule type" value="mRNA"/>
</dbReference>
<dbReference type="EMBL" id="EF121981">
    <property type="protein sequence ID" value="ABL63420.1"/>
    <property type="molecule type" value="mRNA"/>
</dbReference>
<dbReference type="EMBL" id="EF121982">
    <property type="protein sequence ID" value="ABL63421.1"/>
    <property type="molecule type" value="mRNA"/>
</dbReference>
<dbReference type="EMBL" id="AF242544">
    <property type="protein sequence ID" value="AAF61257.1"/>
    <property type="status" value="ALT_INIT"/>
    <property type="molecule type" value="mRNA"/>
</dbReference>
<dbReference type="EMBL" id="AF169549">
    <property type="protein sequence ID" value="AAD49733.1"/>
    <property type="molecule type" value="mRNA"/>
</dbReference>
<dbReference type="RefSeq" id="NP_445871.1">
    <property type="nucleotide sequence ID" value="NM_053419.1"/>
</dbReference>
<dbReference type="SMR" id="Q9JKC9"/>
<dbReference type="BioGRID" id="249979">
    <property type="interactions" value="3"/>
</dbReference>
<dbReference type="FunCoup" id="Q9JKC9">
    <property type="interactions" value="2273"/>
</dbReference>
<dbReference type="STRING" id="10116.ENSRNOP00000070454"/>
<dbReference type="CarbonylDB" id="Q9JKC9"/>
<dbReference type="GlyGen" id="Q9JKC9">
    <property type="glycosylation" value="2 sites"/>
</dbReference>
<dbReference type="iPTMnet" id="Q9JKC9"/>
<dbReference type="PhosphoSitePlus" id="Q9JKC9"/>
<dbReference type="jPOST" id="Q9JKC9"/>
<dbReference type="PaxDb" id="10116-ENSRNOP00000052759"/>
<dbReference type="GeneID" id="84479"/>
<dbReference type="KEGG" id="rno:84479"/>
<dbReference type="AGR" id="RGD:620684"/>
<dbReference type="CTD" id="11276"/>
<dbReference type="RGD" id="620684">
    <property type="gene designation" value="Synrg"/>
</dbReference>
<dbReference type="eggNOG" id="KOG0998">
    <property type="taxonomic scope" value="Eukaryota"/>
</dbReference>
<dbReference type="InParanoid" id="Q9JKC9"/>
<dbReference type="PhylomeDB" id="Q9JKC9"/>
<dbReference type="PRO" id="PR:Q9JKC9"/>
<dbReference type="Proteomes" id="UP000002494">
    <property type="component" value="Unplaced"/>
</dbReference>
<dbReference type="GO" id="GO:0030130">
    <property type="term" value="C:clathrin coat of trans-Golgi network vesicle"/>
    <property type="evidence" value="ECO:0000314"/>
    <property type="project" value="RGD"/>
</dbReference>
<dbReference type="GO" id="GO:0048471">
    <property type="term" value="C:perinuclear region of cytoplasm"/>
    <property type="evidence" value="ECO:0007669"/>
    <property type="project" value="UniProtKB-SubCell"/>
</dbReference>
<dbReference type="GO" id="GO:0006897">
    <property type="term" value="P:endocytosis"/>
    <property type="evidence" value="ECO:0007669"/>
    <property type="project" value="UniProtKB-KW"/>
</dbReference>
<dbReference type="GO" id="GO:0015031">
    <property type="term" value="P:protein transport"/>
    <property type="evidence" value="ECO:0007669"/>
    <property type="project" value="UniProtKB-KW"/>
</dbReference>
<dbReference type="CDD" id="cd00052">
    <property type="entry name" value="EH"/>
    <property type="match status" value="1"/>
</dbReference>
<dbReference type="FunFam" id="1.10.238.10:FF:000075">
    <property type="entry name" value="synergin gamma isoform X2"/>
    <property type="match status" value="1"/>
</dbReference>
<dbReference type="Gene3D" id="1.10.238.10">
    <property type="entry name" value="EF-hand"/>
    <property type="match status" value="1"/>
</dbReference>
<dbReference type="InterPro" id="IPR011992">
    <property type="entry name" value="EF-hand-dom_pair"/>
</dbReference>
<dbReference type="InterPro" id="IPR000261">
    <property type="entry name" value="EH_dom"/>
</dbReference>
<dbReference type="InterPro" id="IPR039656">
    <property type="entry name" value="SYNRG"/>
</dbReference>
<dbReference type="PANTHER" id="PTHR15463">
    <property type="entry name" value="AP1 GAMMA SUBUNIT BINDING PROTEIN 1"/>
    <property type="match status" value="1"/>
</dbReference>
<dbReference type="PANTHER" id="PTHR15463:SF2">
    <property type="entry name" value="SYNERGIN GAMMA"/>
    <property type="match status" value="1"/>
</dbReference>
<dbReference type="Pfam" id="PF12763">
    <property type="entry name" value="EH"/>
    <property type="match status" value="1"/>
</dbReference>
<dbReference type="SMART" id="SM00027">
    <property type="entry name" value="EH"/>
    <property type="match status" value="1"/>
</dbReference>
<dbReference type="SUPFAM" id="SSF47473">
    <property type="entry name" value="EF-hand"/>
    <property type="match status" value="1"/>
</dbReference>
<dbReference type="PROSITE" id="PS50031">
    <property type="entry name" value="EH"/>
    <property type="match status" value="1"/>
</dbReference>
<sequence>MALRPGAGASGAAGAGTGPGGAGSFMFPVAGGMRPPQGLIPMQQQGFPMVSVMQPNMQGMMGMNYSSQMSQGPIAMQAGIPMGPMPAAGVPFLGQPPFLGMRPAAPQYTPDMQKQFAEEQQKRFEQQQKLLEEERKRRQFEEQKQKLRLLSSVKPKTGEKNRDDALEAIKGNLDGFSRDAKMHPTPASHPKKPDCPTSSHSTKTVSPSSAFLGEDEFSGFMQGPVELPTCGPSSTAQPFQSFLPSTPLGQLHTQKAGAQPLPPGQAPVSFAVHGVHGQIPCLSAASASHSMQKAGPSLEEKLLVSCDISASGQEHIKLSSPEAGHRAVVPGSSKNSPGLMAHNGGAVDGCVSGPTTAVAEKTSDQNLSKEESGVGVFPSQDPVQPRMPPWIYNESLVPDAYKKILETTMTPTGIDTAKLYPILMSSGLPRETLGQIWALANRTTPGKLTKEELYTVLAMVAVTQRGVPAMSPDTLNQFPAAPIPTLSGFPMTLPTPVSQPTAMTSGPAGSIPLSLGQPIMGINLVGPVGGAAAPTSSGFMPAYPSNQVGKTEEDDFQDFQDASKSGSIDDSFTDFQEVPASSKTSNSQHGNSAPSLLIPLPGTKASTDKYAVFKGISAEKPSENPASFGESGDKYSAFRELEPTADSKPLGESFAEFRSTGTDDGFTDFKTADSVSPLEPPTKDSFPSAFASGAAQQTQTQVKTPLNLADLDMFSSVDCSGEKPVPFSAAFSTSKSVSSRPQPAGSAAAPASLASTKASSLADDFGEFNLFGEYSNPASVGEQDDFADFMAFGNSSIPSEPKADDKYEALREEGSPGALSTSTVEGAHNPPVSSSKYDVFKQLSLEGAGLAIEEFKENTPSTKSDGDFADFHSSKFSSTSSDKSLGEKAVAFRHAKEDSASVKSLDLPSIGGSSVGKEDSEDALSVQFDMKLADVGGDLKHVMSDSSLDLPTVSGQHPPAAGSALASEDALPETPFPAFASFKDMMPQTTEQKEYESGDFQDFTRQDMPMVDRSQENTCPSPASSVASHETPKEGADDFGEFQSEKPKISKFDFLVANSQSKMKSSEEMIKSELATFDLSVQGSHKRSLSLGDKEISRSSPSPALEQPFRDRSNTLSERAALPVIRDKYKDLTGEVEENERYAYEWQRCLGSALDVIKKANDTLNGISSSAVCTEVIQSAQGMEYLLGVVEVYRVTKRVELGIKATAVCSEKLQQLLKDIDKVWNNLIGFMSLTTLTPDENSLDFSSCMLRPGIKNAQELACGVCLLNVDSRSRKEETPAEEQPKKAFNSETDSFKLAYGGHQYHASCANFWINCVEPKPPGLLLPDLL</sequence>
<comment type="function">
    <text evidence="2">Plays a role in endocytosis and/or membrane trafficking at the trans-Golgi network (TGN) (By similarity). May act by linking the adapter protein complex AP-1 to other proteins (By similarity). Component of clathrin-coated vesicles (By similarity). Component of the aftiphilin/p200/gamma-synergin complex, which plays roles in AP1G1/AP-1-mediated protein trafficking including the trafficking of transferrin from early to recycling endosomes, and the membrane trafficking of furin and the lysosomal enzyme cathepsin D between the trans-Golgi network (TGN) and endosomes (By similarity).</text>
</comment>
<comment type="subunit">
    <text evidence="2 7">Self-associates (By similarity). Interacts with GGA1 (via GAE domain) (By similarity). Interacts with GGA2 and GGA3 (By similarity). Interacts with AP1G1 (via GAE domain), a subunit of adapter protein complex AP-1 (By similarity). Interacts with AP1G2 (via GAE domain) a subunit of adapter protein complex AP-1 (By similarity). Component of the aftiphilin/p200/gamma-synergin complex, at least composed of AFTPH/aftiphilin, HEATR5B/p200a and SYNRG/gamma-synergin, which plays a role in the AP1G1/AP-1-mediated trafficking of transferrin from early to recycling endosomes (By similarity). Within the complex interacts with AFTPH/aftiphilin and HEATR5B/p200a; the interactions are direct (By similarity). Interacts (via EH domain) with SCAMP1 (PubMed:10777571).</text>
</comment>
<comment type="subcellular location">
    <subcellularLocation>
        <location evidence="6">Cytoplasm</location>
    </subcellularLocation>
    <subcellularLocation>
        <location evidence="6">Golgi apparatus</location>
        <location evidence="6">trans-Golgi network membrane</location>
        <topology evidence="6">Peripheral membrane protein</topology>
    </subcellularLocation>
    <subcellularLocation>
        <location evidence="2">Cytoplasm</location>
        <location evidence="2">Perinuclear region</location>
    </subcellularLocation>
    <subcellularLocation>
        <location evidence="2">Cytoplasmic vesicle</location>
        <location evidence="2">Clathrin-coated vesicle</location>
    </subcellularLocation>
    <text evidence="2 6">Localization at clathrin-coated vesicles depends on AFTPH/aftiphilin (By similarity). Associates with membranes via the adapter protein complex AP-1 (PubMed:10477754). Colocalizes with AP1G1 (PubMed:10477754).</text>
</comment>
<comment type="alternative products">
    <event type="alternative splicing"/>
    <isoform>
        <id>Q9JKC9-1</id>
        <name>1</name>
        <sequence type="displayed"/>
    </isoform>
    <isoform>
        <id>Q9JKC9-2</id>
        <name>2</name>
        <sequence type="described" ref="VSP_023017"/>
    </isoform>
    <isoform>
        <id>Q9JKC9-3</id>
        <name>3</name>
        <sequence type="described" ref="VSP_023017 VSP_023019"/>
    </isoform>
    <isoform>
        <id>Q9JKC9-4</id>
        <name>4</name>
        <sequence type="described" ref="VSP_023018 VSP_023019"/>
    </isoform>
</comment>
<comment type="tissue specificity">
    <text evidence="6">Detected in brain and liver (at protein level). Ubiquitously expressed.</text>
</comment>
<comment type="domain">
    <text evidence="1">The DFXDF motifs mediate the interaction with gamma-appendage subunits AP1G1 and AP1G2.</text>
</comment>
<comment type="sequence caution" evidence="9">
    <conflict type="erroneous initiation">
        <sequence resource="EMBL-CDS" id="AAF61257"/>
    </conflict>
</comment>
<keyword id="KW-0007">Acetylation</keyword>
<keyword id="KW-0025">Alternative splicing</keyword>
<keyword id="KW-0175">Coiled coil</keyword>
<keyword id="KW-0963">Cytoplasm</keyword>
<keyword id="KW-0968">Cytoplasmic vesicle</keyword>
<keyword id="KW-0254">Endocytosis</keyword>
<keyword id="KW-0333">Golgi apparatus</keyword>
<keyword id="KW-0472">Membrane</keyword>
<keyword id="KW-0597">Phosphoprotein</keyword>
<keyword id="KW-0653">Protein transport</keyword>
<keyword id="KW-1185">Reference proteome</keyword>
<keyword id="KW-0677">Repeat</keyword>
<keyword id="KW-0813">Transport</keyword>
<accession>Q9JKC9</accession>
<accession>A1EC70</accession>
<accession>A1EC72</accession>
<accession>A1EC74</accession>
<accession>A1EC75</accession>
<accession>Q9R145</accession>
<gene>
    <name type="primary">Synrg</name>
    <name type="synonym">Ap1gbp1</name>
    <name type="synonym">Syng</name>
</gene>